<gene>
    <name evidence="1" type="primary">ilvC</name>
    <name type="ordered locus">RPC_3248</name>
</gene>
<keyword id="KW-0028">Amino-acid biosynthesis</keyword>
<keyword id="KW-0100">Branched-chain amino acid biosynthesis</keyword>
<keyword id="KW-0460">Magnesium</keyword>
<keyword id="KW-0479">Metal-binding</keyword>
<keyword id="KW-0521">NADP</keyword>
<keyword id="KW-0560">Oxidoreductase</keyword>
<dbReference type="EC" id="1.1.1.86" evidence="1"/>
<dbReference type="EMBL" id="CP000301">
    <property type="protein sequence ID" value="ABD88790.1"/>
    <property type="molecule type" value="Genomic_DNA"/>
</dbReference>
<dbReference type="SMR" id="Q211Z6"/>
<dbReference type="STRING" id="316056.RPC_3248"/>
<dbReference type="KEGG" id="rpc:RPC_3248"/>
<dbReference type="eggNOG" id="COG0059">
    <property type="taxonomic scope" value="Bacteria"/>
</dbReference>
<dbReference type="HOGENOM" id="CLU_033821_0_1_5"/>
<dbReference type="OrthoDB" id="9804088at2"/>
<dbReference type="UniPathway" id="UPA00047">
    <property type="reaction ID" value="UER00056"/>
</dbReference>
<dbReference type="UniPathway" id="UPA00049">
    <property type="reaction ID" value="UER00060"/>
</dbReference>
<dbReference type="GO" id="GO:0005829">
    <property type="term" value="C:cytosol"/>
    <property type="evidence" value="ECO:0007669"/>
    <property type="project" value="TreeGrafter"/>
</dbReference>
<dbReference type="GO" id="GO:0004455">
    <property type="term" value="F:ketol-acid reductoisomerase activity"/>
    <property type="evidence" value="ECO:0007669"/>
    <property type="project" value="UniProtKB-UniRule"/>
</dbReference>
<dbReference type="GO" id="GO:0000287">
    <property type="term" value="F:magnesium ion binding"/>
    <property type="evidence" value="ECO:0007669"/>
    <property type="project" value="UniProtKB-UniRule"/>
</dbReference>
<dbReference type="GO" id="GO:0050661">
    <property type="term" value="F:NADP binding"/>
    <property type="evidence" value="ECO:0007669"/>
    <property type="project" value="InterPro"/>
</dbReference>
<dbReference type="GO" id="GO:0009097">
    <property type="term" value="P:isoleucine biosynthetic process"/>
    <property type="evidence" value="ECO:0007669"/>
    <property type="project" value="UniProtKB-UniRule"/>
</dbReference>
<dbReference type="GO" id="GO:0009099">
    <property type="term" value="P:L-valine biosynthetic process"/>
    <property type="evidence" value="ECO:0007669"/>
    <property type="project" value="UniProtKB-UniRule"/>
</dbReference>
<dbReference type="FunFam" id="3.40.50.720:FF:000023">
    <property type="entry name" value="Ketol-acid reductoisomerase (NADP(+))"/>
    <property type="match status" value="1"/>
</dbReference>
<dbReference type="Gene3D" id="6.10.240.10">
    <property type="match status" value="1"/>
</dbReference>
<dbReference type="Gene3D" id="3.40.50.720">
    <property type="entry name" value="NAD(P)-binding Rossmann-like Domain"/>
    <property type="match status" value="1"/>
</dbReference>
<dbReference type="HAMAP" id="MF_00435">
    <property type="entry name" value="IlvC"/>
    <property type="match status" value="1"/>
</dbReference>
<dbReference type="InterPro" id="IPR008927">
    <property type="entry name" value="6-PGluconate_DH-like_C_sf"/>
</dbReference>
<dbReference type="InterPro" id="IPR013023">
    <property type="entry name" value="KARI"/>
</dbReference>
<dbReference type="InterPro" id="IPR000506">
    <property type="entry name" value="KARI_C"/>
</dbReference>
<dbReference type="InterPro" id="IPR013116">
    <property type="entry name" value="KARI_N"/>
</dbReference>
<dbReference type="InterPro" id="IPR014359">
    <property type="entry name" value="KARI_prok"/>
</dbReference>
<dbReference type="InterPro" id="IPR036291">
    <property type="entry name" value="NAD(P)-bd_dom_sf"/>
</dbReference>
<dbReference type="NCBIfam" id="TIGR00465">
    <property type="entry name" value="ilvC"/>
    <property type="match status" value="1"/>
</dbReference>
<dbReference type="NCBIfam" id="NF004017">
    <property type="entry name" value="PRK05479.1"/>
    <property type="match status" value="1"/>
</dbReference>
<dbReference type="NCBIfam" id="NF009940">
    <property type="entry name" value="PRK13403.1"/>
    <property type="match status" value="1"/>
</dbReference>
<dbReference type="PANTHER" id="PTHR21371">
    <property type="entry name" value="KETOL-ACID REDUCTOISOMERASE, MITOCHONDRIAL"/>
    <property type="match status" value="1"/>
</dbReference>
<dbReference type="PANTHER" id="PTHR21371:SF1">
    <property type="entry name" value="KETOL-ACID REDUCTOISOMERASE, MITOCHONDRIAL"/>
    <property type="match status" value="1"/>
</dbReference>
<dbReference type="Pfam" id="PF01450">
    <property type="entry name" value="KARI_C"/>
    <property type="match status" value="1"/>
</dbReference>
<dbReference type="Pfam" id="PF07991">
    <property type="entry name" value="KARI_N"/>
    <property type="match status" value="1"/>
</dbReference>
<dbReference type="PIRSF" id="PIRSF000116">
    <property type="entry name" value="IlvC_gammaproteo"/>
    <property type="match status" value="1"/>
</dbReference>
<dbReference type="SUPFAM" id="SSF48179">
    <property type="entry name" value="6-phosphogluconate dehydrogenase C-terminal domain-like"/>
    <property type="match status" value="1"/>
</dbReference>
<dbReference type="SUPFAM" id="SSF51735">
    <property type="entry name" value="NAD(P)-binding Rossmann-fold domains"/>
    <property type="match status" value="1"/>
</dbReference>
<dbReference type="PROSITE" id="PS51851">
    <property type="entry name" value="KARI_C"/>
    <property type="match status" value="1"/>
</dbReference>
<dbReference type="PROSITE" id="PS51850">
    <property type="entry name" value="KARI_N"/>
    <property type="match status" value="1"/>
</dbReference>
<organism>
    <name type="scientific">Rhodopseudomonas palustris (strain BisB18)</name>
    <dbReference type="NCBI Taxonomy" id="316056"/>
    <lineage>
        <taxon>Bacteria</taxon>
        <taxon>Pseudomonadati</taxon>
        <taxon>Pseudomonadota</taxon>
        <taxon>Alphaproteobacteria</taxon>
        <taxon>Hyphomicrobiales</taxon>
        <taxon>Nitrobacteraceae</taxon>
        <taxon>Rhodopseudomonas</taxon>
    </lineage>
</organism>
<sequence>MRVYYDRDADLNLIKGKKVVIIGYGSQGHAHALNLKDSGVKDVAIALRKGSTSAQKAEAAGFKVMEVAEAAKWADVMMMLTPDELQGDIYREHLHDNMKNGAALLFAHGLNVHFNLIEPRADLDVVMVAPKGPGHTVRSEYQRGGGVPCLIAVHKDSSGNAHDLGLSYASAIGGGRAGIIETTFREECETDLFGEQVVLCGGLVELIKGGFETLVEAGYAPEMAYFECLHEVKLIVDLIYEGGIANMNYSISNTAEYGEYVTGPRIVTPETKKEMKKVLEDIQNGIFTRNWMLENKVNQTSFKATRAKLAEHQIEEVGAKLRDMMPWIKKGALVDKSKN</sequence>
<reference key="1">
    <citation type="submission" date="2006-03" db="EMBL/GenBank/DDBJ databases">
        <title>Complete sequence of Rhodopseudomonas palustris BisB18.</title>
        <authorList>
            <consortium name="US DOE Joint Genome Institute"/>
            <person name="Copeland A."/>
            <person name="Lucas S."/>
            <person name="Lapidus A."/>
            <person name="Barry K."/>
            <person name="Detter J.C."/>
            <person name="Glavina del Rio T."/>
            <person name="Hammon N."/>
            <person name="Israni S."/>
            <person name="Dalin E."/>
            <person name="Tice H."/>
            <person name="Pitluck S."/>
            <person name="Chain P."/>
            <person name="Malfatti S."/>
            <person name="Shin M."/>
            <person name="Vergez L."/>
            <person name="Schmutz J."/>
            <person name="Larimer F."/>
            <person name="Land M."/>
            <person name="Hauser L."/>
            <person name="Pelletier D.A."/>
            <person name="Kyrpides N."/>
            <person name="Anderson I."/>
            <person name="Oda Y."/>
            <person name="Harwood C.S."/>
            <person name="Richardson P."/>
        </authorList>
    </citation>
    <scope>NUCLEOTIDE SEQUENCE [LARGE SCALE GENOMIC DNA]</scope>
    <source>
        <strain>BisB18</strain>
    </source>
</reference>
<name>ILVC_RHOPB</name>
<feature type="chain" id="PRO_0000252780" description="Ketol-acid reductoisomerase (NADP(+))">
    <location>
        <begin position="1"/>
        <end position="339"/>
    </location>
</feature>
<feature type="domain" description="KARI N-terminal Rossmann" evidence="2">
    <location>
        <begin position="1"/>
        <end position="182"/>
    </location>
</feature>
<feature type="domain" description="KARI C-terminal knotted" evidence="3">
    <location>
        <begin position="183"/>
        <end position="328"/>
    </location>
</feature>
<feature type="active site" evidence="1">
    <location>
        <position position="108"/>
    </location>
</feature>
<feature type="binding site" evidence="1">
    <location>
        <begin position="24"/>
        <end position="27"/>
    </location>
    <ligand>
        <name>NADP(+)</name>
        <dbReference type="ChEBI" id="CHEBI:58349"/>
    </ligand>
</feature>
<feature type="binding site" evidence="1">
    <location>
        <position position="48"/>
    </location>
    <ligand>
        <name>NADP(+)</name>
        <dbReference type="ChEBI" id="CHEBI:58349"/>
    </ligand>
</feature>
<feature type="binding site" evidence="1">
    <location>
        <position position="51"/>
    </location>
    <ligand>
        <name>NADP(+)</name>
        <dbReference type="ChEBI" id="CHEBI:58349"/>
    </ligand>
</feature>
<feature type="binding site" evidence="1">
    <location>
        <position position="53"/>
    </location>
    <ligand>
        <name>NADP(+)</name>
        <dbReference type="ChEBI" id="CHEBI:58349"/>
    </ligand>
</feature>
<feature type="binding site" evidence="1">
    <location>
        <begin position="83"/>
        <end position="86"/>
    </location>
    <ligand>
        <name>NADP(+)</name>
        <dbReference type="ChEBI" id="CHEBI:58349"/>
    </ligand>
</feature>
<feature type="binding site" evidence="1">
    <location>
        <position position="134"/>
    </location>
    <ligand>
        <name>NADP(+)</name>
        <dbReference type="ChEBI" id="CHEBI:58349"/>
    </ligand>
</feature>
<feature type="binding site" evidence="1">
    <location>
        <position position="191"/>
    </location>
    <ligand>
        <name>Mg(2+)</name>
        <dbReference type="ChEBI" id="CHEBI:18420"/>
        <label>1</label>
    </ligand>
</feature>
<feature type="binding site" evidence="1">
    <location>
        <position position="191"/>
    </location>
    <ligand>
        <name>Mg(2+)</name>
        <dbReference type="ChEBI" id="CHEBI:18420"/>
        <label>2</label>
    </ligand>
</feature>
<feature type="binding site" evidence="1">
    <location>
        <position position="195"/>
    </location>
    <ligand>
        <name>Mg(2+)</name>
        <dbReference type="ChEBI" id="CHEBI:18420"/>
        <label>1</label>
    </ligand>
</feature>
<feature type="binding site" evidence="1">
    <location>
        <position position="227"/>
    </location>
    <ligand>
        <name>Mg(2+)</name>
        <dbReference type="ChEBI" id="CHEBI:18420"/>
        <label>2</label>
    </ligand>
</feature>
<feature type="binding site" evidence="1">
    <location>
        <position position="231"/>
    </location>
    <ligand>
        <name>Mg(2+)</name>
        <dbReference type="ChEBI" id="CHEBI:18420"/>
        <label>2</label>
    </ligand>
</feature>
<feature type="binding site" evidence="1">
    <location>
        <position position="252"/>
    </location>
    <ligand>
        <name>substrate</name>
    </ligand>
</feature>
<accession>Q211Z6</accession>
<proteinExistence type="inferred from homology"/>
<protein>
    <recommendedName>
        <fullName evidence="1">Ketol-acid reductoisomerase (NADP(+))</fullName>
        <shortName evidence="1">KARI</shortName>
        <ecNumber evidence="1">1.1.1.86</ecNumber>
    </recommendedName>
    <alternativeName>
        <fullName evidence="1">Acetohydroxy-acid isomeroreductase</fullName>
        <shortName evidence="1">AHIR</shortName>
    </alternativeName>
    <alternativeName>
        <fullName evidence="1">Alpha-keto-beta-hydroxylacyl reductoisomerase</fullName>
    </alternativeName>
    <alternativeName>
        <fullName evidence="1">Ketol-acid reductoisomerase type 1</fullName>
    </alternativeName>
    <alternativeName>
        <fullName evidence="1">Ketol-acid reductoisomerase type I</fullName>
    </alternativeName>
</protein>
<comment type="function">
    <text evidence="1">Involved in the biosynthesis of branched-chain amino acids (BCAA). Catalyzes an alkyl-migration followed by a ketol-acid reduction of (S)-2-acetolactate (S2AL) to yield (R)-2,3-dihydroxy-isovalerate. In the isomerase reaction, S2AL is rearranged via a Mg-dependent methyl migration to produce 3-hydroxy-3-methyl-2-ketobutyrate (HMKB). In the reductase reaction, this 2-ketoacid undergoes a metal-dependent reduction by NADPH to yield (R)-2,3-dihydroxy-isovalerate.</text>
</comment>
<comment type="catalytic activity">
    <reaction evidence="1">
        <text>(2R)-2,3-dihydroxy-3-methylbutanoate + NADP(+) = (2S)-2-acetolactate + NADPH + H(+)</text>
        <dbReference type="Rhea" id="RHEA:22068"/>
        <dbReference type="ChEBI" id="CHEBI:15378"/>
        <dbReference type="ChEBI" id="CHEBI:49072"/>
        <dbReference type="ChEBI" id="CHEBI:57783"/>
        <dbReference type="ChEBI" id="CHEBI:58349"/>
        <dbReference type="ChEBI" id="CHEBI:58476"/>
        <dbReference type="EC" id="1.1.1.86"/>
    </reaction>
</comment>
<comment type="catalytic activity">
    <reaction evidence="1">
        <text>(2R,3R)-2,3-dihydroxy-3-methylpentanoate + NADP(+) = (S)-2-ethyl-2-hydroxy-3-oxobutanoate + NADPH + H(+)</text>
        <dbReference type="Rhea" id="RHEA:13493"/>
        <dbReference type="ChEBI" id="CHEBI:15378"/>
        <dbReference type="ChEBI" id="CHEBI:49256"/>
        <dbReference type="ChEBI" id="CHEBI:49258"/>
        <dbReference type="ChEBI" id="CHEBI:57783"/>
        <dbReference type="ChEBI" id="CHEBI:58349"/>
        <dbReference type="EC" id="1.1.1.86"/>
    </reaction>
</comment>
<comment type="cofactor">
    <cofactor evidence="1">
        <name>Mg(2+)</name>
        <dbReference type="ChEBI" id="CHEBI:18420"/>
    </cofactor>
    <text evidence="1">Binds 2 magnesium ions per subunit.</text>
</comment>
<comment type="pathway">
    <text evidence="1">Amino-acid biosynthesis; L-isoleucine biosynthesis; L-isoleucine from 2-oxobutanoate: step 2/4.</text>
</comment>
<comment type="pathway">
    <text evidence="1">Amino-acid biosynthesis; L-valine biosynthesis; L-valine from pyruvate: step 2/4.</text>
</comment>
<comment type="similarity">
    <text evidence="1">Belongs to the ketol-acid reductoisomerase family.</text>
</comment>
<evidence type="ECO:0000255" key="1">
    <source>
        <dbReference type="HAMAP-Rule" id="MF_00435"/>
    </source>
</evidence>
<evidence type="ECO:0000255" key="2">
    <source>
        <dbReference type="PROSITE-ProRule" id="PRU01197"/>
    </source>
</evidence>
<evidence type="ECO:0000255" key="3">
    <source>
        <dbReference type="PROSITE-ProRule" id="PRU01198"/>
    </source>
</evidence>